<feature type="signal peptide" evidence="1">
    <location>
        <begin position="1"/>
        <end position="18"/>
    </location>
</feature>
<feature type="propeptide" id="PRO_0000003172">
    <location>
        <begin position="19"/>
        <end position="43"/>
    </location>
</feature>
<feature type="peptide" id="PRO_0000003173" description="Maximin-4">
    <location>
        <begin position="44"/>
        <end position="70"/>
    </location>
</feature>
<feature type="propeptide" id="PRO_0000003174" evidence="2">
    <location>
        <begin position="74"/>
        <end position="118"/>
    </location>
</feature>
<feature type="peptide" id="PRO_0000003175" description="Maximin-H3">
    <location>
        <begin position="119"/>
        <end position="138"/>
    </location>
</feature>
<feature type="modified residue" description="Asparagine amide" evidence="2 3">
    <location>
        <position position="70"/>
    </location>
</feature>
<feature type="modified residue" description="Isoleucine amide" evidence="2 3">
    <location>
        <position position="138"/>
    </location>
</feature>
<sequence>MNFKYIVAVSFLIASAYARSVQNDEQSLSQRDVLEEESLREIRGIGGVLLSAGKAALKGLAKVLAEKYANGKRTAEDHEVMKRLEAVMRDLDSLDHPEEASERETRGFNQDEIAKEKRILGPVLGLVGNALGGLIKKIG</sequence>
<reference key="1">
    <citation type="journal article" date="2005" name="Eur. J. Immunol.">
        <title>Variety of antimicrobial peptides in the Bombina maxima toad and evidence of their rapid diversification.</title>
        <authorList>
            <person name="Lee W.-H."/>
            <person name="Li Y."/>
            <person name="Lai R."/>
            <person name="Li S."/>
            <person name="Zhang Y."/>
            <person name="Wang W."/>
        </authorList>
    </citation>
    <scope>NUCLEOTIDE SEQUENCE [MRNA]</scope>
    <scope>AMIDATION AT ASN-70 AND ILE-138</scope>
    <source>
        <tissue>Skin</tissue>
    </source>
</reference>
<reference key="2">
    <citation type="submission" date="2001-07" db="UniProtKB">
        <title>Isolation and structural characterisation of antimicrobial peptides from the venom of the Chinese large-webbed bell toad (Bombina maxima).</title>
        <authorList>
            <person name="Chen T.B."/>
            <person name="McClean S."/>
            <person name="Orr D.F."/>
            <person name="Bjourson A.J."/>
            <person name="Rao P.F."/>
            <person name="Shaw C."/>
        </authorList>
    </citation>
    <scope>PROTEIN SEQUENCE OF 44-70</scope>
    <scope>FUNCTION OF MAXIMIN-4</scope>
    <scope>SUBCELLULAR LOCATION</scope>
    <scope>TISSUE SPECIFICITY</scope>
    <source>
        <tissue>Skin secretion</tissue>
    </source>
</reference>
<reference key="3">
    <citation type="journal article" date="2002" name="Peptides">
        <title>Antimicrobial peptides from skin secretions of Chinese red belly toad Bombina maxima.</title>
        <authorList>
            <person name="Lai R."/>
            <person name="Zheng Y.-T."/>
            <person name="Shen J.-H."/>
            <person name="Liu G.-J."/>
            <person name="Liu H."/>
            <person name="Lee W.-H."/>
            <person name="Tang S.-Z."/>
            <person name="Zhang Y."/>
        </authorList>
    </citation>
    <scope>PROTEIN SEQUENCE OF 44-70 AND 119-138</scope>
    <scope>AMIDATION AT ASN-70 AND ILE-138</scope>
    <scope>FUNCTION OF MAXIMIN-4 AND MAXIMIN-H3</scope>
    <scope>MASS SPECTROMETRY</scope>
    <source>
        <tissue>Skin</tissue>
        <tissue>Skin secretion</tissue>
    </source>
</reference>
<accession>Q58T62</accession>
<dbReference type="EMBL" id="AY848998">
    <property type="protein sequence ID" value="AAX50219.1"/>
    <property type="molecule type" value="mRNA"/>
</dbReference>
<dbReference type="EMBL" id="AY848984">
    <property type="protein sequence ID" value="AAX50205.1"/>
    <property type="molecule type" value="mRNA"/>
</dbReference>
<dbReference type="SMR" id="Q58T62"/>
<dbReference type="GO" id="GO:0005576">
    <property type="term" value="C:extracellular region"/>
    <property type="evidence" value="ECO:0007669"/>
    <property type="project" value="UniProtKB-SubCell"/>
</dbReference>
<dbReference type="GO" id="GO:0042742">
    <property type="term" value="P:defense response to bacterium"/>
    <property type="evidence" value="ECO:0007669"/>
    <property type="project" value="UniProtKB-KW"/>
</dbReference>
<dbReference type="GO" id="GO:0050832">
    <property type="term" value="P:defense response to fungus"/>
    <property type="evidence" value="ECO:0007669"/>
    <property type="project" value="UniProtKB-KW"/>
</dbReference>
<dbReference type="GO" id="GO:0031640">
    <property type="term" value="P:killing of cells of another organism"/>
    <property type="evidence" value="ECO:0007669"/>
    <property type="project" value="UniProtKB-KW"/>
</dbReference>
<dbReference type="InterPro" id="IPR007962">
    <property type="entry name" value="Bombinin"/>
</dbReference>
<dbReference type="Pfam" id="PF05298">
    <property type="entry name" value="Bombinin"/>
    <property type="match status" value="1"/>
</dbReference>
<comment type="function">
    <text>Maximin-4 shows antibacterial activity against both Gram-positive and Gram-negative bacteria. It also shows antimicrobial activity against the fungus C.albicans, but not against A.flavus nor P.uticale. It has little hemolytic activity. It does not possess a significant cytotoxicity against tumor cell lines. It does not possess a significant anti-HIV activity.</text>
</comment>
<comment type="function">
    <text>Maximin-H3 shows antibacterial activity against both Gram-positive and Gram-negative bacteria. It also shows antimicrobial activity against the fungus C.albicans. Shows strong hemolytic activity.</text>
</comment>
<comment type="subcellular location">
    <subcellularLocation>
        <location evidence="4">Secreted</location>
    </subcellularLocation>
</comment>
<comment type="tissue specificity">
    <text evidence="4">Expressed by the skin glands.</text>
</comment>
<comment type="mass spectrometry">
    <molecule>Maximin-4</molecule>
</comment>
<comment type="mass spectrometry">
    <molecule>Maximin-H3</molecule>
</comment>
<comment type="similarity">
    <text evidence="5">Belongs to the bombinin family.</text>
</comment>
<name>M4H36_BOMMX</name>
<protein>
    <recommendedName>
        <fullName>Maximins 4/H3 type 6</fullName>
    </recommendedName>
    <component>
        <recommendedName>
            <fullName>Maximin-4</fullName>
        </recommendedName>
    </component>
    <component>
        <recommendedName>
            <fullName>Maximin-H3</fullName>
        </recommendedName>
    </component>
</protein>
<evidence type="ECO:0000255" key="1"/>
<evidence type="ECO:0000269" key="2">
    <source>
    </source>
</evidence>
<evidence type="ECO:0000269" key="3">
    <source>
    </source>
</evidence>
<evidence type="ECO:0000269" key="4">
    <source ref="2"/>
</evidence>
<evidence type="ECO:0000305" key="5"/>
<organism>
    <name type="scientific">Bombina maxima</name>
    <name type="common">Giant fire-bellied toad</name>
    <name type="synonym">Chinese red belly toad</name>
    <dbReference type="NCBI Taxonomy" id="161274"/>
    <lineage>
        <taxon>Eukaryota</taxon>
        <taxon>Metazoa</taxon>
        <taxon>Chordata</taxon>
        <taxon>Craniata</taxon>
        <taxon>Vertebrata</taxon>
        <taxon>Euteleostomi</taxon>
        <taxon>Amphibia</taxon>
        <taxon>Batrachia</taxon>
        <taxon>Anura</taxon>
        <taxon>Bombinatoridae</taxon>
        <taxon>Bombina</taxon>
    </lineage>
</organism>
<proteinExistence type="evidence at protein level"/>
<keyword id="KW-0027">Amidation</keyword>
<keyword id="KW-0878">Amphibian defense peptide</keyword>
<keyword id="KW-0044">Antibiotic</keyword>
<keyword id="KW-0929">Antimicrobial</keyword>
<keyword id="KW-0165">Cleavage on pair of basic residues</keyword>
<keyword id="KW-0204">Cytolysis</keyword>
<keyword id="KW-0903">Direct protein sequencing</keyword>
<keyword id="KW-0295">Fungicide</keyword>
<keyword id="KW-0354">Hemolysis</keyword>
<keyword id="KW-0964">Secreted</keyword>
<keyword id="KW-0732">Signal</keyword>